<organism>
    <name type="scientific">Cucurbita maxima</name>
    <name type="common">Pumpkin</name>
    <name type="synonym">Winter squash</name>
    <dbReference type="NCBI Taxonomy" id="3661"/>
    <lineage>
        <taxon>Eukaryota</taxon>
        <taxon>Viridiplantae</taxon>
        <taxon>Streptophyta</taxon>
        <taxon>Embryophyta</taxon>
        <taxon>Tracheophyta</taxon>
        <taxon>Spermatophyta</taxon>
        <taxon>Magnoliopsida</taxon>
        <taxon>eudicotyledons</taxon>
        <taxon>Gunneridae</taxon>
        <taxon>Pentapetalae</taxon>
        <taxon>rosids</taxon>
        <taxon>fabids</taxon>
        <taxon>Cucurbitales</taxon>
        <taxon>Cucurbitaceae</taxon>
        <taxon>Cucurbiteae</taxon>
        <taxon>Cucurbita</taxon>
    </lineage>
</organism>
<protein>
    <recommendedName>
        <fullName>16 kDa phloem protein 2</fullName>
    </recommendedName>
</protein>
<accession>Q9ZT46</accession>
<proteinExistence type="evidence at protein level"/>
<name>PP16B_CUCMA</name>
<comment type="function">
    <text>Binds to both sense and antisense RNA. Interacts with mesophyll plasmodesmata to mediate its own cell-to-cell transport and potentiate RNA trafficking.</text>
</comment>
<comment type="cofactor">
    <cofactor evidence="1">
        <name>Ca(2+)</name>
        <dbReference type="ChEBI" id="CHEBI:29108"/>
    </cofactor>
</comment>
<comment type="tissue specificity">
    <text>Sieve elements of leaves, stems, roots and flowers.</text>
</comment>
<feature type="initiator methionine" description="Removed" evidence="2">
    <location>
        <position position="1"/>
    </location>
</feature>
<feature type="chain" id="PRO_0000058530" description="16 kDa phloem protein 2">
    <location>
        <begin position="2"/>
        <end position="138"/>
    </location>
</feature>
<feature type="domain" description="C2" evidence="1">
    <location>
        <begin position="1"/>
        <end position="108"/>
    </location>
</feature>
<feature type="binding site" evidence="1">
    <location>
        <position position="20"/>
    </location>
    <ligand>
        <name>Ca(2+)</name>
        <dbReference type="ChEBI" id="CHEBI:29108"/>
        <label>1</label>
    </ligand>
</feature>
<feature type="binding site" evidence="1">
    <location>
        <position position="20"/>
    </location>
    <ligand>
        <name>Ca(2+)</name>
        <dbReference type="ChEBI" id="CHEBI:29108"/>
        <label>2</label>
    </ligand>
</feature>
<feature type="binding site" evidence="1">
    <location>
        <position position="27"/>
    </location>
    <ligand>
        <name>Ca(2+)</name>
        <dbReference type="ChEBI" id="CHEBI:29108"/>
        <label>1</label>
    </ligand>
</feature>
<feature type="binding site" evidence="1">
    <location>
        <position position="78"/>
    </location>
    <ligand>
        <name>Ca(2+)</name>
        <dbReference type="ChEBI" id="CHEBI:29108"/>
        <label>1</label>
    </ligand>
</feature>
<feature type="binding site" evidence="1">
    <location>
        <position position="78"/>
    </location>
    <ligand>
        <name>Ca(2+)</name>
        <dbReference type="ChEBI" id="CHEBI:29108"/>
        <label>2</label>
    </ligand>
</feature>
<feature type="binding site" evidence="1">
    <location>
        <position position="80"/>
    </location>
    <ligand>
        <name>Ca(2+)</name>
        <dbReference type="ChEBI" id="CHEBI:29108"/>
        <label>1</label>
    </ligand>
</feature>
<feature type="binding site" evidence="1">
    <location>
        <position position="80"/>
    </location>
    <ligand>
        <name>Ca(2+)</name>
        <dbReference type="ChEBI" id="CHEBI:29108"/>
        <label>2</label>
    </ligand>
</feature>
<feature type="binding site" evidence="1">
    <location>
        <position position="86"/>
    </location>
    <ligand>
        <name>Ca(2+)</name>
        <dbReference type="ChEBI" id="CHEBI:29108"/>
        <label>2</label>
    </ligand>
</feature>
<reference key="1">
    <citation type="journal article" date="1999" name="Science">
        <title>Plant paralog to viral movement protein that potentiates transport of mRNA into the phloem.</title>
        <authorList>
            <person name="Xoconostle-Cazares B."/>
            <person name="Xiang Y."/>
            <person name="Ruiz-Medrano R."/>
            <person name="Wang H.-L."/>
            <person name="Monzer J."/>
            <person name="Yoo B.-C."/>
            <person name="McFarland K.C."/>
            <person name="Franceschi V.R."/>
            <person name="Lucas W.J."/>
        </authorList>
    </citation>
    <scope>NUCLEOTIDE SEQUENCE [MRNA]</scope>
    <scope>PROTEIN SEQUENCE OF 2-21</scope>
    <source>
        <strain>cv. Big max</strain>
        <tissue>Stem</tissue>
    </source>
</reference>
<gene>
    <name type="primary">PP16-2</name>
</gene>
<keyword id="KW-0106">Calcium</keyword>
<keyword id="KW-0903">Direct protein sequencing</keyword>
<keyword id="KW-0479">Metal-binding</keyword>
<keyword id="KW-1185">Reference proteome</keyword>
<keyword id="KW-0694">RNA-binding</keyword>
<keyword id="KW-0813">Transport</keyword>
<evidence type="ECO:0000255" key="1">
    <source>
        <dbReference type="PROSITE-ProRule" id="PRU00041"/>
    </source>
</evidence>
<evidence type="ECO:0000269" key="2">
    <source>
    </source>
</evidence>
<sequence>MGMGMMEVHLISGKGLQAHDPLNKPIDPYAEINFKGQERMSKVAKNAGPDPIWNEKFKFLVEYPGSGGDFHILFKVMDHDAIDGDDYIGDVKIDVQNLLAEGVRKGWSELPPRMYQVLAHKIYFKGEIEVGVFFQRQG</sequence>
<dbReference type="EMBL" id="AF079171">
    <property type="protein sequence ID" value="AAD05497.1"/>
    <property type="molecule type" value="mRNA"/>
</dbReference>
<dbReference type="SMR" id="Q9ZT46"/>
<dbReference type="OrthoDB" id="419768at2759"/>
<dbReference type="Proteomes" id="UP000504608">
    <property type="component" value="Unplaced"/>
</dbReference>
<dbReference type="GO" id="GO:0046872">
    <property type="term" value="F:metal ion binding"/>
    <property type="evidence" value="ECO:0007669"/>
    <property type="project" value="UniProtKB-KW"/>
</dbReference>
<dbReference type="GO" id="GO:0003723">
    <property type="term" value="F:RNA binding"/>
    <property type="evidence" value="ECO:0007669"/>
    <property type="project" value="UniProtKB-KW"/>
</dbReference>
<dbReference type="CDD" id="cd04049">
    <property type="entry name" value="C2_putative_Elicitor-responsive_gene"/>
    <property type="match status" value="1"/>
</dbReference>
<dbReference type="Gene3D" id="2.60.40.150">
    <property type="entry name" value="C2 domain"/>
    <property type="match status" value="1"/>
</dbReference>
<dbReference type="InterPro" id="IPR000008">
    <property type="entry name" value="C2_dom"/>
</dbReference>
<dbReference type="InterPro" id="IPR035892">
    <property type="entry name" value="C2_domain_sf"/>
</dbReference>
<dbReference type="PANTHER" id="PTHR46502:SF15">
    <property type="entry name" value="16 KDA PHLOEM PROTEIN 1"/>
    <property type="match status" value="1"/>
</dbReference>
<dbReference type="PANTHER" id="PTHR46502">
    <property type="entry name" value="C2 DOMAIN-CONTAINING"/>
    <property type="match status" value="1"/>
</dbReference>
<dbReference type="Pfam" id="PF00168">
    <property type="entry name" value="C2"/>
    <property type="match status" value="1"/>
</dbReference>
<dbReference type="SMART" id="SM00239">
    <property type="entry name" value="C2"/>
    <property type="match status" value="1"/>
</dbReference>
<dbReference type="SUPFAM" id="SSF49562">
    <property type="entry name" value="C2 domain (Calcium/lipid-binding domain, CaLB)"/>
    <property type="match status" value="1"/>
</dbReference>
<dbReference type="PROSITE" id="PS50004">
    <property type="entry name" value="C2"/>
    <property type="match status" value="1"/>
</dbReference>